<proteinExistence type="inferred from homology"/>
<dbReference type="EC" id="1.1.5.4" evidence="1"/>
<dbReference type="EMBL" id="AE007869">
    <property type="protein sequence ID" value="AAK86620.2"/>
    <property type="status" value="ALT_INIT"/>
    <property type="molecule type" value="Genomic_DNA"/>
</dbReference>
<dbReference type="PIR" id="AD2676">
    <property type="entry name" value="AD2676"/>
</dbReference>
<dbReference type="PIR" id="C97458">
    <property type="entry name" value="C97458"/>
</dbReference>
<dbReference type="RefSeq" id="NP_353835.2">
    <property type="nucleotide sequence ID" value="NC_003062.2"/>
</dbReference>
<dbReference type="SMR" id="Q8UH73"/>
<dbReference type="STRING" id="176299.Atu0811"/>
<dbReference type="EnsemblBacteria" id="AAK86620">
    <property type="protein sequence ID" value="AAK86620"/>
    <property type="gene ID" value="Atu0811"/>
</dbReference>
<dbReference type="KEGG" id="atu:Atu0811"/>
<dbReference type="PATRIC" id="fig|176299.10.peg.811"/>
<dbReference type="eggNOG" id="COG0579">
    <property type="taxonomic scope" value="Bacteria"/>
</dbReference>
<dbReference type="HOGENOM" id="CLU_028151_0_0_5"/>
<dbReference type="OrthoDB" id="9763983at2"/>
<dbReference type="UniPathway" id="UPA00223">
    <property type="reaction ID" value="UER01008"/>
</dbReference>
<dbReference type="Proteomes" id="UP000000813">
    <property type="component" value="Chromosome circular"/>
</dbReference>
<dbReference type="GO" id="GO:0047545">
    <property type="term" value="F:2-hydroxyglutarate dehydrogenase activity"/>
    <property type="evidence" value="ECO:0007669"/>
    <property type="project" value="TreeGrafter"/>
</dbReference>
<dbReference type="GO" id="GO:0008924">
    <property type="term" value="F:L-malate dehydrogenase (quinone) activity"/>
    <property type="evidence" value="ECO:0007669"/>
    <property type="project" value="UniProtKB-UniRule"/>
</dbReference>
<dbReference type="GO" id="GO:0006099">
    <property type="term" value="P:tricarboxylic acid cycle"/>
    <property type="evidence" value="ECO:0007669"/>
    <property type="project" value="UniProtKB-UniRule"/>
</dbReference>
<dbReference type="Gene3D" id="3.30.9.10">
    <property type="entry name" value="D-Amino Acid Oxidase, subunit A, domain 2"/>
    <property type="match status" value="1"/>
</dbReference>
<dbReference type="Gene3D" id="3.50.50.60">
    <property type="entry name" value="FAD/NAD(P)-binding domain"/>
    <property type="match status" value="1"/>
</dbReference>
<dbReference type="HAMAP" id="MF_00212">
    <property type="entry name" value="MQO"/>
    <property type="match status" value="1"/>
</dbReference>
<dbReference type="InterPro" id="IPR036188">
    <property type="entry name" value="FAD/NAD-bd_sf"/>
</dbReference>
<dbReference type="InterPro" id="IPR006231">
    <property type="entry name" value="MQO"/>
</dbReference>
<dbReference type="NCBIfam" id="TIGR01320">
    <property type="entry name" value="mal_quin_oxido"/>
    <property type="match status" value="1"/>
</dbReference>
<dbReference type="NCBIfam" id="NF003603">
    <property type="entry name" value="PRK05257.1-1"/>
    <property type="match status" value="1"/>
</dbReference>
<dbReference type="NCBIfam" id="NF003605">
    <property type="entry name" value="PRK05257.1-4"/>
    <property type="match status" value="1"/>
</dbReference>
<dbReference type="NCBIfam" id="NF003606">
    <property type="entry name" value="PRK05257.2-1"/>
    <property type="match status" value="1"/>
</dbReference>
<dbReference type="NCBIfam" id="NF003609">
    <property type="entry name" value="PRK05257.2-5"/>
    <property type="match status" value="1"/>
</dbReference>
<dbReference type="NCBIfam" id="NF003611">
    <property type="entry name" value="PRK05257.3-2"/>
    <property type="match status" value="1"/>
</dbReference>
<dbReference type="NCBIfam" id="NF009875">
    <property type="entry name" value="PRK13339.1"/>
    <property type="match status" value="1"/>
</dbReference>
<dbReference type="PANTHER" id="PTHR43104">
    <property type="entry name" value="L-2-HYDROXYGLUTARATE DEHYDROGENASE, MITOCHONDRIAL"/>
    <property type="match status" value="1"/>
</dbReference>
<dbReference type="PANTHER" id="PTHR43104:SF2">
    <property type="entry name" value="L-2-HYDROXYGLUTARATE DEHYDROGENASE, MITOCHONDRIAL"/>
    <property type="match status" value="1"/>
</dbReference>
<dbReference type="Pfam" id="PF06039">
    <property type="entry name" value="Mqo"/>
    <property type="match status" value="1"/>
</dbReference>
<dbReference type="SUPFAM" id="SSF51905">
    <property type="entry name" value="FAD/NAD(P)-binding domain"/>
    <property type="match status" value="1"/>
</dbReference>
<reference key="1">
    <citation type="journal article" date="2001" name="Science">
        <title>The genome of the natural genetic engineer Agrobacterium tumefaciens C58.</title>
        <authorList>
            <person name="Wood D.W."/>
            <person name="Setubal J.C."/>
            <person name="Kaul R."/>
            <person name="Monks D.E."/>
            <person name="Kitajima J.P."/>
            <person name="Okura V.K."/>
            <person name="Zhou Y."/>
            <person name="Chen L."/>
            <person name="Wood G.E."/>
            <person name="Almeida N.F. Jr."/>
            <person name="Woo L."/>
            <person name="Chen Y."/>
            <person name="Paulsen I.T."/>
            <person name="Eisen J.A."/>
            <person name="Karp P.D."/>
            <person name="Bovee D. Sr."/>
            <person name="Chapman P."/>
            <person name="Clendenning J."/>
            <person name="Deatherage G."/>
            <person name="Gillet W."/>
            <person name="Grant C."/>
            <person name="Kutyavin T."/>
            <person name="Levy R."/>
            <person name="Li M.-J."/>
            <person name="McClelland E."/>
            <person name="Palmieri A."/>
            <person name="Raymond C."/>
            <person name="Rouse G."/>
            <person name="Saenphimmachak C."/>
            <person name="Wu Z."/>
            <person name="Romero P."/>
            <person name="Gordon D."/>
            <person name="Zhang S."/>
            <person name="Yoo H."/>
            <person name="Tao Y."/>
            <person name="Biddle P."/>
            <person name="Jung M."/>
            <person name="Krespan W."/>
            <person name="Perry M."/>
            <person name="Gordon-Kamm B."/>
            <person name="Liao L."/>
            <person name="Kim S."/>
            <person name="Hendrick C."/>
            <person name="Zhao Z.-Y."/>
            <person name="Dolan M."/>
            <person name="Chumley F."/>
            <person name="Tingey S.V."/>
            <person name="Tomb J.-F."/>
            <person name="Gordon M.P."/>
            <person name="Olson M.V."/>
            <person name="Nester E.W."/>
        </authorList>
    </citation>
    <scope>NUCLEOTIDE SEQUENCE [LARGE SCALE GENOMIC DNA]</scope>
    <source>
        <strain>C58 / ATCC 33970</strain>
    </source>
</reference>
<reference key="2">
    <citation type="journal article" date="2001" name="Science">
        <title>Genome sequence of the plant pathogen and biotechnology agent Agrobacterium tumefaciens C58.</title>
        <authorList>
            <person name="Goodner B."/>
            <person name="Hinkle G."/>
            <person name="Gattung S."/>
            <person name="Miller N."/>
            <person name="Blanchard M."/>
            <person name="Qurollo B."/>
            <person name="Goldman B.S."/>
            <person name="Cao Y."/>
            <person name="Askenazi M."/>
            <person name="Halling C."/>
            <person name="Mullin L."/>
            <person name="Houmiel K."/>
            <person name="Gordon J."/>
            <person name="Vaudin M."/>
            <person name="Iartchouk O."/>
            <person name="Epp A."/>
            <person name="Liu F."/>
            <person name="Wollam C."/>
            <person name="Allinger M."/>
            <person name="Doughty D."/>
            <person name="Scott C."/>
            <person name="Lappas C."/>
            <person name="Markelz B."/>
            <person name="Flanagan C."/>
            <person name="Crowell C."/>
            <person name="Gurson J."/>
            <person name="Lomo C."/>
            <person name="Sear C."/>
            <person name="Strub G."/>
            <person name="Cielo C."/>
            <person name="Slater S."/>
        </authorList>
    </citation>
    <scope>NUCLEOTIDE SEQUENCE [LARGE SCALE GENOMIC DNA]</scope>
    <source>
        <strain>C58 / ATCC 33970</strain>
    </source>
</reference>
<gene>
    <name evidence="1" type="primary">mqo</name>
    <name type="ordered locus">Atu0811</name>
    <name type="ORF">AGR_C_1485</name>
</gene>
<name>MQO_AGRFC</name>
<feature type="chain" id="PRO_0000128703" description="Probable malate:quinone oxidoreductase">
    <location>
        <begin position="1"/>
        <end position="523"/>
    </location>
</feature>
<evidence type="ECO:0000255" key="1">
    <source>
        <dbReference type="HAMAP-Rule" id="MF_00212"/>
    </source>
</evidence>
<evidence type="ECO:0000305" key="2"/>
<keyword id="KW-0274">FAD</keyword>
<keyword id="KW-0285">Flavoprotein</keyword>
<keyword id="KW-0560">Oxidoreductase</keyword>
<keyword id="KW-1185">Reference proteome</keyword>
<keyword id="KW-0816">Tricarboxylic acid cycle</keyword>
<sequence>MAAKKVDVLLIGGGIMSATLGVWLRELEPTWSMQMLERLDGVALESSNGWNNAGTGHSALAELNYTPEDDNGNIKITQAVNINESFQISRQFWAWQVRNGVLKNPRSFINHTPHMSFVWGDENVAYLEKRYQALKASPLFAGMEFSTDPEQIKKWVPLMMEGRDPSQKLGATWSPLGTDMEFGEITRQFVSHLQSDQNFDLQVNSEVSDIQRNADGSWRVTYTNTKTDAEQVVDAKFVFIGAGGGALHLLQMSGVPEADDYAGFPVGGSFLINENPDVTMQHLAKAYGKASVGSPPMSVPHLDTRVLGGKRVILFGPFATFSTKFLKEGSYFDLVSSVTTSNAWPMVRVGIDEYPLVEYLAGQLMMSDDDRFAALKEYFPNAKQGEWRLWQAGQRVQIIKRDEEKGGVLRLGTEVVAAKDGSIAGLLGASPGASTAAPIMLSVLEKVFKDKVATPEWQAKLRQIVPSYGTKLNDDPEKVREEWAYTAEHLQLPTPPQIDLEALKGAGAAPAGAPVKKVPDIAL</sequence>
<comment type="catalytic activity">
    <reaction evidence="1">
        <text>(S)-malate + a quinone = a quinol + oxaloacetate</text>
        <dbReference type="Rhea" id="RHEA:46012"/>
        <dbReference type="ChEBI" id="CHEBI:15589"/>
        <dbReference type="ChEBI" id="CHEBI:16452"/>
        <dbReference type="ChEBI" id="CHEBI:24646"/>
        <dbReference type="ChEBI" id="CHEBI:132124"/>
        <dbReference type="EC" id="1.1.5.4"/>
    </reaction>
</comment>
<comment type="cofactor">
    <cofactor evidence="1">
        <name>FAD</name>
        <dbReference type="ChEBI" id="CHEBI:57692"/>
    </cofactor>
</comment>
<comment type="pathway">
    <text evidence="1">Carbohydrate metabolism; tricarboxylic acid cycle; oxaloacetate from (S)-malate (quinone route): step 1/1.</text>
</comment>
<comment type="similarity">
    <text evidence="1">Belongs to the MQO family.</text>
</comment>
<comment type="sequence caution" evidence="2">
    <conflict type="erroneous initiation">
        <sequence resource="EMBL-CDS" id="AAK86620"/>
    </conflict>
</comment>
<organism>
    <name type="scientific">Agrobacterium fabrum (strain C58 / ATCC 33970)</name>
    <name type="common">Agrobacterium tumefaciens (strain C58)</name>
    <dbReference type="NCBI Taxonomy" id="176299"/>
    <lineage>
        <taxon>Bacteria</taxon>
        <taxon>Pseudomonadati</taxon>
        <taxon>Pseudomonadota</taxon>
        <taxon>Alphaproteobacteria</taxon>
        <taxon>Hyphomicrobiales</taxon>
        <taxon>Rhizobiaceae</taxon>
        <taxon>Rhizobium/Agrobacterium group</taxon>
        <taxon>Agrobacterium</taxon>
        <taxon>Agrobacterium tumefaciens complex</taxon>
    </lineage>
</organism>
<accession>Q8UH73</accession>
<protein>
    <recommendedName>
        <fullName evidence="1">Probable malate:quinone oxidoreductase</fullName>
        <ecNumber evidence="1">1.1.5.4</ecNumber>
    </recommendedName>
    <alternativeName>
        <fullName evidence="1">MQO</fullName>
    </alternativeName>
    <alternativeName>
        <fullName evidence="1">Malate dehydrogenase [quinone]</fullName>
    </alternativeName>
</protein>